<reference key="1">
    <citation type="journal article" date="2007" name="Science">
        <title>The Fusarium graminearum genome reveals a link between localized polymorphism and pathogen specialization.</title>
        <authorList>
            <person name="Cuomo C.A."/>
            <person name="Gueldener U."/>
            <person name="Xu J.-R."/>
            <person name="Trail F."/>
            <person name="Turgeon B.G."/>
            <person name="Di Pietro A."/>
            <person name="Walton J.D."/>
            <person name="Ma L.-J."/>
            <person name="Baker S.E."/>
            <person name="Rep M."/>
            <person name="Adam G."/>
            <person name="Antoniw J."/>
            <person name="Baldwin T."/>
            <person name="Calvo S.E."/>
            <person name="Chang Y.-L."/>
            <person name="DeCaprio D."/>
            <person name="Gale L.R."/>
            <person name="Gnerre S."/>
            <person name="Goswami R.S."/>
            <person name="Hammond-Kosack K."/>
            <person name="Harris L.J."/>
            <person name="Hilburn K."/>
            <person name="Kennell J.C."/>
            <person name="Kroken S."/>
            <person name="Magnuson J.K."/>
            <person name="Mannhaupt G."/>
            <person name="Mauceli E.W."/>
            <person name="Mewes H.-W."/>
            <person name="Mitterbauer R."/>
            <person name="Muehlbauer G."/>
            <person name="Muensterkoetter M."/>
            <person name="Nelson D."/>
            <person name="O'Donnell K."/>
            <person name="Ouellet T."/>
            <person name="Qi W."/>
            <person name="Quesneville H."/>
            <person name="Roncero M.I.G."/>
            <person name="Seong K.-Y."/>
            <person name="Tetko I.V."/>
            <person name="Urban M."/>
            <person name="Waalwijk C."/>
            <person name="Ward T.J."/>
            <person name="Yao J."/>
            <person name="Birren B.W."/>
            <person name="Kistler H.C."/>
        </authorList>
    </citation>
    <scope>NUCLEOTIDE SEQUENCE [LARGE SCALE GENOMIC DNA]</scope>
    <source>
        <strain>ATCC MYA-4620 / CBS 123657 / FGSC 9075 / NRRL 31084 / PH-1</strain>
    </source>
</reference>
<reference key="2">
    <citation type="journal article" date="2010" name="Nature">
        <title>Comparative genomics reveals mobile pathogenicity chromosomes in Fusarium.</title>
        <authorList>
            <person name="Ma L.-J."/>
            <person name="van der Does H.C."/>
            <person name="Borkovich K.A."/>
            <person name="Coleman J.J."/>
            <person name="Daboussi M.-J."/>
            <person name="Di Pietro A."/>
            <person name="Dufresne M."/>
            <person name="Freitag M."/>
            <person name="Grabherr M."/>
            <person name="Henrissat B."/>
            <person name="Houterman P.M."/>
            <person name="Kang S."/>
            <person name="Shim W.-B."/>
            <person name="Woloshuk C."/>
            <person name="Xie X."/>
            <person name="Xu J.-R."/>
            <person name="Antoniw J."/>
            <person name="Baker S.E."/>
            <person name="Bluhm B.H."/>
            <person name="Breakspear A."/>
            <person name="Brown D.W."/>
            <person name="Butchko R.A.E."/>
            <person name="Chapman S."/>
            <person name="Coulson R."/>
            <person name="Coutinho P.M."/>
            <person name="Danchin E.G.J."/>
            <person name="Diener A."/>
            <person name="Gale L.R."/>
            <person name="Gardiner D.M."/>
            <person name="Goff S."/>
            <person name="Hammond-Kosack K.E."/>
            <person name="Hilburn K."/>
            <person name="Hua-Van A."/>
            <person name="Jonkers W."/>
            <person name="Kazan K."/>
            <person name="Kodira C.D."/>
            <person name="Koehrsen M."/>
            <person name="Kumar L."/>
            <person name="Lee Y.-H."/>
            <person name="Li L."/>
            <person name="Manners J.M."/>
            <person name="Miranda-Saavedra D."/>
            <person name="Mukherjee M."/>
            <person name="Park G."/>
            <person name="Park J."/>
            <person name="Park S.-Y."/>
            <person name="Proctor R.H."/>
            <person name="Regev A."/>
            <person name="Ruiz-Roldan M.C."/>
            <person name="Sain D."/>
            <person name="Sakthikumar S."/>
            <person name="Sykes S."/>
            <person name="Schwartz D.C."/>
            <person name="Turgeon B.G."/>
            <person name="Wapinski I."/>
            <person name="Yoder O."/>
            <person name="Young S."/>
            <person name="Zeng Q."/>
            <person name="Zhou S."/>
            <person name="Galagan J."/>
            <person name="Cuomo C.A."/>
            <person name="Kistler H.C."/>
            <person name="Rep M."/>
        </authorList>
    </citation>
    <scope>GENOME REANNOTATION</scope>
    <source>
        <strain>ATCC MYA-4620 / CBS 123657 / FGSC 9075 / NRRL 31084 / PH-1</strain>
    </source>
</reference>
<reference key="3">
    <citation type="journal article" date="2015" name="BMC Genomics">
        <title>The completed genome sequence of the pathogenic ascomycete fungus Fusarium graminearum.</title>
        <authorList>
            <person name="King R."/>
            <person name="Urban M."/>
            <person name="Hammond-Kosack M.C.U."/>
            <person name="Hassani-Pak K."/>
            <person name="Hammond-Kosack K.E."/>
        </authorList>
    </citation>
    <scope>NUCLEOTIDE SEQUENCE [LARGE SCALE GENOMIC DNA]</scope>
    <source>
        <strain>ATCC MYA-4620 / CBS 123657 / FGSC 9075 / NRRL 31084 / PH-1</strain>
    </source>
</reference>
<reference key="4">
    <citation type="journal article" date="2014" name="Eukaryot. Cell">
        <title>WetA is required for conidiogenesis and conidium maturation in the ascomycete fungus Fusarium graminearum.</title>
        <authorList>
            <person name="Son H."/>
            <person name="Kim M.G."/>
            <person name="Min K."/>
            <person name="Lim J.Y."/>
            <person name="Choi G.J."/>
            <person name="Kim J.C."/>
            <person name="Chae S.K."/>
            <person name="Lee Y.W."/>
        </authorList>
    </citation>
    <scope>FUNCTION</scope>
    <scope>DISRUPTION PHENOTYPE</scope>
</reference>
<reference key="5">
    <citation type="journal article" date="2014" name="J. Microbiol.">
        <title>FgFlbD regulates hyphal differentiation required for sexual and asexual reproduction in the ascomycete fungus Fusarium graminearum.</title>
        <authorList>
            <person name="Son H."/>
            <person name="Kim M.G."/>
            <person name="Chae S.K."/>
            <person name="Lee Y.W."/>
        </authorList>
    </citation>
    <scope>INDUCTION</scope>
</reference>
<proteinExistence type="evidence at transcript level"/>
<protein>
    <recommendedName>
        <fullName evidence="6">Developmental regulatory protein wetA</fullName>
    </recommendedName>
</protein>
<organism>
    <name type="scientific">Gibberella zeae (strain ATCC MYA-4620 / CBS 123657 / FGSC 9075 / NRRL 31084 / PH-1)</name>
    <name type="common">Wheat head blight fungus</name>
    <name type="synonym">Fusarium graminearum</name>
    <dbReference type="NCBI Taxonomy" id="229533"/>
    <lineage>
        <taxon>Eukaryota</taxon>
        <taxon>Fungi</taxon>
        <taxon>Dikarya</taxon>
        <taxon>Ascomycota</taxon>
        <taxon>Pezizomycotina</taxon>
        <taxon>Sordariomycetes</taxon>
        <taxon>Hypocreomycetidae</taxon>
        <taxon>Hypocreales</taxon>
        <taxon>Nectriaceae</taxon>
        <taxon>Fusarium</taxon>
    </lineage>
</organism>
<name>WETA_GIBZE</name>
<feature type="chain" id="PRO_0000435928" description="Developmental regulatory protein wetA">
    <location>
        <begin position="1"/>
        <end position="608"/>
    </location>
</feature>
<feature type="region of interest" description="Disordered" evidence="2">
    <location>
        <begin position="54"/>
        <end position="88"/>
    </location>
</feature>
<feature type="region of interest" description="Disordered" evidence="2">
    <location>
        <begin position="102"/>
        <end position="125"/>
    </location>
</feature>
<feature type="region of interest" description="Disordered" evidence="2">
    <location>
        <begin position="146"/>
        <end position="186"/>
    </location>
</feature>
<feature type="region of interest" description="Disordered" evidence="2">
    <location>
        <begin position="202"/>
        <end position="226"/>
    </location>
</feature>
<feature type="region of interest" description="Disordered" evidence="2">
    <location>
        <begin position="309"/>
        <end position="352"/>
    </location>
</feature>
<feature type="region of interest" description="Disordered" evidence="2">
    <location>
        <begin position="447"/>
        <end position="544"/>
    </location>
</feature>
<feature type="region of interest" description="Disordered" evidence="2">
    <location>
        <begin position="556"/>
        <end position="576"/>
    </location>
</feature>
<feature type="compositionally biased region" description="Low complexity" evidence="2">
    <location>
        <begin position="77"/>
        <end position="88"/>
    </location>
</feature>
<feature type="compositionally biased region" description="Low complexity" evidence="2">
    <location>
        <begin position="107"/>
        <end position="119"/>
    </location>
</feature>
<feature type="compositionally biased region" description="Low complexity" evidence="2">
    <location>
        <begin position="163"/>
        <end position="175"/>
    </location>
</feature>
<feature type="compositionally biased region" description="Basic residues" evidence="2">
    <location>
        <begin position="313"/>
        <end position="338"/>
    </location>
</feature>
<feature type="compositionally biased region" description="Low complexity" evidence="2">
    <location>
        <begin position="339"/>
        <end position="350"/>
    </location>
</feature>
<feature type="compositionally biased region" description="Low complexity" evidence="2">
    <location>
        <begin position="502"/>
        <end position="517"/>
    </location>
</feature>
<accession>I1S0E2</accession>
<accession>A0A0E0RWA0</accession>
<comment type="function">
    <text evidence="1 3">AbaA and wetA are pivotal regulators of conidiophore development and conidium maturation (By similarity). They act individually and together to regulate their own expression and that of numerous other sporulation-specific genes (By similarity). Functions to maintain conidial dormancy by suppressing microcycle conidiation (PubMed:24186953).</text>
</comment>
<comment type="induction">
    <text evidence="4">Expression is positively regulated by flbD (PubMed:25277408).</text>
</comment>
<comment type="disruption phenotype">
    <text evidence="3">Results in abnormal production of conidiophores and conidia, including longer conidia with fewer septa, conidia sensitivity to acute stresses such as oxidative stress and heat stress, and vigorous generation of single-celled conidia through autophagy-dependent microcycle conidiation (PubMed:24186953). Reduces the survival rate of aged conidia (PubMed:24186953).</text>
</comment>
<comment type="similarity">
    <text evidence="6">Belongs to the wetA family.</text>
</comment>
<comment type="sequence caution" evidence="6">
    <conflict type="erroneous initiation">
        <sequence resource="EMBL-CDS" id="ESU16845"/>
    </conflict>
    <text>Truncated N-terminus.</text>
</comment>
<evidence type="ECO:0000250" key="1">
    <source>
        <dbReference type="UniProtKB" id="P22022"/>
    </source>
</evidence>
<evidence type="ECO:0000256" key="2">
    <source>
        <dbReference type="SAM" id="MobiDB-lite"/>
    </source>
</evidence>
<evidence type="ECO:0000269" key="3">
    <source>
    </source>
</evidence>
<evidence type="ECO:0000269" key="4">
    <source>
    </source>
</evidence>
<evidence type="ECO:0000303" key="5">
    <source>
    </source>
</evidence>
<evidence type="ECO:0000305" key="6"/>
<sequence>MPMASWTLPYRVEAVDRDPGFYWQEIEDGHNNDGSADFFGQFINFDSEIPSSMADHHGHNPGMPTLADGLMLDHPSESTASASSGVSTTEDEFDLFSCSSQVDATVPSQPGSSAAPGASHDVDPRSLALADSSGLMVEKHSMVPRVSMSDPELPRVDGISLQSSPGRRVPVSQPSSPTPPNTMTRKPNKFVEALSSTIRKASKLRKPRKPIAMDRPGSPTMDNPPRALRLQHHEYNGNDVFPPSPTTCGPDSTNFVHGFCDDPFDEIPQQHPNNMRFFKTNGIHTPAESPGIKTEPGMYQPEMAGQAVWPHQQHPHPHPHPHHPQAHTHPHPHPHPHPHQQAVAGHPQHAVPVVGPAPETWPGHEYMAQNAHQSGWWDLNLLNQNGEYVVVDPQQQKNANLNLAMHAQHAELPYEYQVHDPNSAGLMIHMPQPRNDSTPAHDLALNAQTYLPPPPPIPPTTERHRPPRAPSSGARHLSCSPIRKTRQPSIPPTPTTVHSRHSSNGSVASARSASGRGMVPGTPTAMRKQRRSRDSSGGSVGDIGFVNFTPSDGGLLMTGVAPSGSSKTKARREREAMERRRRLSEAAMKAVQAAGGDVDKLMEQGFAF</sequence>
<keyword id="KW-0010">Activator</keyword>
<keyword id="KW-0183">Conidiation</keyword>
<keyword id="KW-1185">Reference proteome</keyword>
<keyword id="KW-0749">Sporulation</keyword>
<keyword id="KW-0804">Transcription</keyword>
<keyword id="KW-0805">Transcription regulation</keyword>
<gene>
    <name evidence="5" type="primary">wetA</name>
    <name type="ORF">FGRRES_17727</name>
    <name type="ORF">FGSG_10166</name>
</gene>
<dbReference type="EMBL" id="DS231669">
    <property type="protein sequence ID" value="ESU16845.1"/>
    <property type="status" value="ALT_INIT"/>
    <property type="molecule type" value="Genomic_DNA"/>
</dbReference>
<dbReference type="EMBL" id="HG970332">
    <property type="protein sequence ID" value="CEF75525.1"/>
    <property type="molecule type" value="Genomic_DNA"/>
</dbReference>
<dbReference type="RefSeq" id="XP_011319107.1">
    <property type="nucleotide sequence ID" value="XM_011320805.1"/>
</dbReference>
<dbReference type="SMR" id="I1S0E2"/>
<dbReference type="STRING" id="229533.I1S0E2"/>
<dbReference type="GeneID" id="23557084"/>
<dbReference type="KEGG" id="fgr:FGSG_10166"/>
<dbReference type="VEuPathDB" id="FungiDB:FGRAMPH1_01G07441"/>
<dbReference type="eggNOG" id="ENOG502S8IT">
    <property type="taxonomic scope" value="Eukaryota"/>
</dbReference>
<dbReference type="HOGENOM" id="CLU_100289_0_0_1"/>
<dbReference type="InParanoid" id="I1S0E2"/>
<dbReference type="OrthoDB" id="117061at110618"/>
<dbReference type="Proteomes" id="UP000070720">
    <property type="component" value="Chromosome 1"/>
</dbReference>
<dbReference type="GO" id="GO:0048315">
    <property type="term" value="P:conidium formation"/>
    <property type="evidence" value="ECO:0007669"/>
    <property type="project" value="UniProtKB-KW"/>
</dbReference>
<dbReference type="GO" id="GO:0030435">
    <property type="term" value="P:sporulation resulting in formation of a cellular spore"/>
    <property type="evidence" value="ECO:0007669"/>
    <property type="project" value="UniProtKB-KW"/>
</dbReference>
<dbReference type="InterPro" id="IPR040112">
    <property type="entry name" value="WetA"/>
</dbReference>
<dbReference type="PANTHER" id="PTHR22934:SF25">
    <property type="entry name" value="DEVELOPMENTAL REGULATORY PROTEIN WETA"/>
    <property type="match status" value="1"/>
</dbReference>
<dbReference type="PANTHER" id="PTHR22934">
    <property type="entry name" value="PROTEIN ESC1/WETA-RELATED"/>
    <property type="match status" value="1"/>
</dbReference>